<dbReference type="EC" id="4.6.1.-" evidence="4"/>
<dbReference type="EMBL" id="FJ171352">
    <property type="protein sequence ID" value="ACN48848.1"/>
    <property type="molecule type" value="mRNA"/>
</dbReference>
<dbReference type="SMR" id="C0JAR7"/>
<dbReference type="GO" id="GO:0005576">
    <property type="term" value="C:extracellular region"/>
    <property type="evidence" value="ECO:0007669"/>
    <property type="project" value="UniProtKB-SubCell"/>
</dbReference>
<dbReference type="GO" id="GO:0016829">
    <property type="term" value="F:lyase activity"/>
    <property type="evidence" value="ECO:0007669"/>
    <property type="project" value="UniProtKB-KW"/>
</dbReference>
<dbReference type="GO" id="GO:0046872">
    <property type="term" value="F:metal ion binding"/>
    <property type="evidence" value="ECO:0007669"/>
    <property type="project" value="UniProtKB-KW"/>
</dbReference>
<dbReference type="GO" id="GO:0008081">
    <property type="term" value="F:phosphoric diester hydrolase activity"/>
    <property type="evidence" value="ECO:0007669"/>
    <property type="project" value="InterPro"/>
</dbReference>
<dbReference type="GO" id="GO:0090729">
    <property type="term" value="F:toxin activity"/>
    <property type="evidence" value="ECO:0007669"/>
    <property type="project" value="UniProtKB-KW"/>
</dbReference>
<dbReference type="GO" id="GO:0031640">
    <property type="term" value="P:killing of cells of another organism"/>
    <property type="evidence" value="ECO:0007669"/>
    <property type="project" value="UniProtKB-KW"/>
</dbReference>
<dbReference type="GO" id="GO:0016042">
    <property type="term" value="P:lipid catabolic process"/>
    <property type="evidence" value="ECO:0007669"/>
    <property type="project" value="UniProtKB-KW"/>
</dbReference>
<dbReference type="CDD" id="cd08576">
    <property type="entry name" value="GDPD_like_SMaseD_PLD"/>
    <property type="match status" value="1"/>
</dbReference>
<dbReference type="Gene3D" id="3.20.20.190">
    <property type="entry name" value="Phosphatidylinositol (PI) phosphodiesterase"/>
    <property type="match status" value="1"/>
</dbReference>
<dbReference type="InterPro" id="IPR017946">
    <property type="entry name" value="PLC-like_Pdiesterase_TIM-brl"/>
</dbReference>
<dbReference type="Pfam" id="PF13653">
    <property type="entry name" value="GDPD_2"/>
    <property type="match status" value="1"/>
</dbReference>
<dbReference type="SUPFAM" id="SSF51695">
    <property type="entry name" value="PLC-like phosphodiesterases"/>
    <property type="match status" value="1"/>
</dbReference>
<organism>
    <name type="scientific">Loxosceles hirsuta</name>
    <name type="common">Recluse spider</name>
    <dbReference type="NCBI Taxonomy" id="571525"/>
    <lineage>
        <taxon>Eukaryota</taxon>
        <taxon>Metazoa</taxon>
        <taxon>Ecdysozoa</taxon>
        <taxon>Arthropoda</taxon>
        <taxon>Chelicerata</taxon>
        <taxon>Arachnida</taxon>
        <taxon>Araneae</taxon>
        <taxon>Araneomorphae</taxon>
        <taxon>Haplogynae</taxon>
        <taxon>Scytodoidea</taxon>
        <taxon>Sicariidae</taxon>
        <taxon>Loxosceles</taxon>
    </lineage>
</organism>
<protein>
    <recommendedName>
        <fullName evidence="6">Dermonecrotic toxin LhSicTox-alphaIA2avii</fullName>
        <ecNumber evidence="4">4.6.1.-</ecNumber>
    </recommendedName>
    <alternativeName>
        <fullName>Phospholipase D</fullName>
        <shortName>PLD</shortName>
    </alternativeName>
    <alternativeName>
        <fullName>Sphingomyelin phosphodiesterase D</fullName>
        <shortName>SMD</shortName>
        <shortName>SMase D</shortName>
        <shortName>Sphingomyelinase D</shortName>
    </alternativeName>
</protein>
<reference key="1">
    <citation type="journal article" date="2009" name="Mol. Biol. Evol.">
        <title>Molecular evolution, functional variation, and proposed nomenclature of the gene family that includes sphingomyelinase D in sicariid spider venoms.</title>
        <authorList>
            <person name="Binford G.J."/>
            <person name="Bodner M.R."/>
            <person name="Cordes M.H."/>
            <person name="Baldwin K.L."/>
            <person name="Rynerson M.R."/>
            <person name="Burns S.N."/>
            <person name="Zobel-Thropp P.A."/>
        </authorList>
    </citation>
    <scope>NUCLEOTIDE SEQUENCE [MRNA]</scope>
    <scope>NOMENCLATURE</scope>
    <source>
        <tissue>Venom gland</tissue>
    </source>
</reference>
<proteinExistence type="evidence at transcript level"/>
<evidence type="ECO:0000250" key="1">
    <source>
        <dbReference type="UniProtKB" id="A0A0D4WTV1"/>
    </source>
</evidence>
<evidence type="ECO:0000250" key="2">
    <source>
        <dbReference type="UniProtKB" id="A0A0D4WV12"/>
    </source>
</evidence>
<evidence type="ECO:0000250" key="3">
    <source>
        <dbReference type="UniProtKB" id="P0CE80"/>
    </source>
</evidence>
<evidence type="ECO:0000250" key="4">
    <source>
        <dbReference type="UniProtKB" id="Q4ZFU2"/>
    </source>
</evidence>
<evidence type="ECO:0000250" key="5">
    <source>
        <dbReference type="UniProtKB" id="Q8I914"/>
    </source>
</evidence>
<evidence type="ECO:0000303" key="6">
    <source>
    </source>
</evidence>
<evidence type="ECO:0000305" key="7"/>
<evidence type="ECO:0000305" key="8">
    <source>
    </source>
</evidence>
<feature type="chain" id="PRO_0000392755" description="Dermonecrotic toxin LhSicTox-alphaIA2avii">
    <location>
        <begin position="1" status="less than"/>
        <end position="273"/>
    </location>
</feature>
<feature type="active site" evidence="5">
    <location>
        <position position="5"/>
    </location>
</feature>
<feature type="active site" description="Nucleophile" evidence="5">
    <location>
        <position position="41"/>
    </location>
</feature>
<feature type="binding site" evidence="5">
    <location>
        <position position="25"/>
    </location>
    <ligand>
        <name>Mg(2+)</name>
        <dbReference type="ChEBI" id="CHEBI:18420"/>
    </ligand>
</feature>
<feature type="binding site" evidence="5">
    <location>
        <position position="27"/>
    </location>
    <ligand>
        <name>Mg(2+)</name>
        <dbReference type="ChEBI" id="CHEBI:18420"/>
    </ligand>
</feature>
<feature type="binding site" evidence="5">
    <location>
        <position position="85"/>
    </location>
    <ligand>
        <name>Mg(2+)</name>
        <dbReference type="ChEBI" id="CHEBI:18420"/>
    </ligand>
</feature>
<feature type="disulfide bond" evidence="3">
    <location>
        <begin position="45"/>
        <end position="51"/>
    </location>
</feature>
<feature type="disulfide bond" evidence="3">
    <location>
        <begin position="47"/>
        <end position="190"/>
    </location>
</feature>
<feature type="non-terminal residue">
    <location>
        <position position="1"/>
    </location>
</feature>
<comment type="function">
    <text evidence="1 3">Dermonecrotic toxins cleave the phosphodiester linkage between the phosphate and headgroup of certain phospholipids (sphingolipid and lysolipid substrates), forming an alcohol (often choline) and a cyclic phosphate (By similarity). This toxin acts on sphingomyelin (SM) (By similarity). It may also act on ceramide phosphoethanolamine (CPE), lysophosphatidylcholine (LPC) and lysophosphatidylethanolamine (LPE), but not on lysophosphatidylserine (LPS), and lysophosphatidylglycerol (LPG) (By similarity). It acts by transphosphatidylation, releasing exclusively cyclic phosphate products as second products (By similarity). Induces dermonecrosis, hemolysis, increased vascular permeability, edema, inflammatory response, and platelet aggregation (By similarity).</text>
</comment>
<comment type="catalytic activity">
    <reaction evidence="1">
        <text>an N-(acyl)-sphingosylphosphocholine = an N-(acyl)-sphingosyl-1,3-cyclic phosphate + choline</text>
        <dbReference type="Rhea" id="RHEA:60652"/>
        <dbReference type="ChEBI" id="CHEBI:15354"/>
        <dbReference type="ChEBI" id="CHEBI:64583"/>
        <dbReference type="ChEBI" id="CHEBI:143892"/>
    </reaction>
</comment>
<comment type="catalytic activity">
    <reaction evidence="1">
        <text>an N-(acyl)-sphingosylphosphoethanolamine = an N-(acyl)-sphingosyl-1,3-cyclic phosphate + ethanolamine</text>
        <dbReference type="Rhea" id="RHEA:60648"/>
        <dbReference type="ChEBI" id="CHEBI:57603"/>
        <dbReference type="ChEBI" id="CHEBI:143891"/>
        <dbReference type="ChEBI" id="CHEBI:143892"/>
    </reaction>
</comment>
<comment type="catalytic activity">
    <reaction evidence="1">
        <text>a 1-acyl-sn-glycero-3-phosphocholine = a 1-acyl-sn-glycero-2,3-cyclic phosphate + choline</text>
        <dbReference type="Rhea" id="RHEA:60700"/>
        <dbReference type="ChEBI" id="CHEBI:15354"/>
        <dbReference type="ChEBI" id="CHEBI:58168"/>
        <dbReference type="ChEBI" id="CHEBI:143947"/>
    </reaction>
</comment>
<comment type="catalytic activity">
    <reaction evidence="1">
        <text>a 1-acyl-sn-glycero-3-phosphoethanolamine = a 1-acyl-sn-glycero-2,3-cyclic phosphate + ethanolamine</text>
        <dbReference type="Rhea" id="RHEA:60704"/>
        <dbReference type="ChEBI" id="CHEBI:57603"/>
        <dbReference type="ChEBI" id="CHEBI:64381"/>
        <dbReference type="ChEBI" id="CHEBI:143947"/>
    </reaction>
</comment>
<comment type="cofactor">
    <cofactor evidence="5">
        <name>Mg(2+)</name>
        <dbReference type="ChEBI" id="CHEBI:18420"/>
    </cofactor>
    <text evidence="5">Binds 1 Mg(2+) ion per subunit.</text>
</comment>
<comment type="subcellular location">
    <subcellularLocation>
        <location evidence="8">Secreted</location>
    </subcellularLocation>
</comment>
<comment type="tissue specificity">
    <text evidence="8">Expressed by the venom gland.</text>
</comment>
<comment type="similarity">
    <text evidence="7">Belongs to the arthropod phospholipase D family. Class II subfamily.</text>
</comment>
<comment type="caution">
    <text evidence="1 2 4">The most common activity assay for dermonecrotic toxins detects enzymatic activity by monitoring choline release from substrate. Liberation of choline from sphingomyelin (SM) or lysophosphatidylcholine (LPC) is commonly assumed to result from substrate hydrolysis, giving either ceramide-1-phosphate (C1P) or lysophosphatidic acid (LPA), respectively, as a second product. However, two studies from Lajoie and colleagues (2013 and 2015) report the observation of exclusive formation of cyclic phosphate products as second products, resulting from intramolecular transphosphatidylation. Cyclic phosphates have vastly different biological properties from their monoester counterparts, and they may be relevant to the pathology of brown spider envenomation.</text>
</comment>
<accession>C0JAR7</accession>
<sequence>WIMGHMVNAIYQTDEFVNLGANSIETDVSFDDNANPEYTYHGIPCDCGRSCLKWENYNDFLKGLRSATTPGNSKYQSKLILVVFDLKTGSLYDNQASEAGKKLAKNLLKHYWNNGNNGGRAYIVLSIPDLNHYPLIKGFTDTLKQEGHPELLEKVGYDFSGNDAVGDVAKAYKKAGVSGHVWQSDGITNCLLRGLTRVKEAVANRDSGNGYINKVYYWTVDKRATTRDALDAGVDGVMTNYPDVIADVMNEAAYKNKVRLATYEDSPWVTFKK</sequence>
<name>A1IA7_LOXHI</name>
<keyword id="KW-0204">Cytolysis</keyword>
<keyword id="KW-1061">Dermonecrotic toxin</keyword>
<keyword id="KW-1015">Disulfide bond</keyword>
<keyword id="KW-0354">Hemolysis</keyword>
<keyword id="KW-0442">Lipid degradation</keyword>
<keyword id="KW-0443">Lipid metabolism</keyword>
<keyword id="KW-0456">Lyase</keyword>
<keyword id="KW-0460">Magnesium</keyword>
<keyword id="KW-0479">Metal-binding</keyword>
<keyword id="KW-0964">Secreted</keyword>
<keyword id="KW-0800">Toxin</keyword>